<reference key="1">
    <citation type="journal article" date="2000" name="Nature">
        <title>DNA sequence of both chromosomes of the cholera pathogen Vibrio cholerae.</title>
        <authorList>
            <person name="Heidelberg J.F."/>
            <person name="Eisen J.A."/>
            <person name="Nelson W.C."/>
            <person name="Clayton R.A."/>
            <person name="Gwinn M.L."/>
            <person name="Dodson R.J."/>
            <person name="Haft D.H."/>
            <person name="Hickey E.K."/>
            <person name="Peterson J.D."/>
            <person name="Umayam L.A."/>
            <person name="Gill S.R."/>
            <person name="Nelson K.E."/>
            <person name="Read T.D."/>
            <person name="Tettelin H."/>
            <person name="Richardson D.L."/>
            <person name="Ermolaeva M.D."/>
            <person name="Vamathevan J.J."/>
            <person name="Bass S."/>
            <person name="Qin H."/>
            <person name="Dragoi I."/>
            <person name="Sellers P."/>
            <person name="McDonald L.A."/>
            <person name="Utterback T.R."/>
            <person name="Fleischmann R.D."/>
            <person name="Nierman W.C."/>
            <person name="White O."/>
            <person name="Salzberg S.L."/>
            <person name="Smith H.O."/>
            <person name="Colwell R.R."/>
            <person name="Mekalanos J.J."/>
            <person name="Venter J.C."/>
            <person name="Fraser C.M."/>
        </authorList>
    </citation>
    <scope>NUCLEOTIDE SEQUENCE [LARGE SCALE GENOMIC DNA]</scope>
    <source>
        <strain>ATCC 39315 / El Tor Inaba N16961</strain>
    </source>
</reference>
<reference key="2">
    <citation type="journal article" date="2002" name="Proc. Natl. Acad. Sci. U.S.A.">
        <title>YgbQ, a cell division protein in Escherichia coli and Vibrio cholerae, localizes in codependent fashion with FtsL to the division site.</title>
        <authorList>
            <person name="Buddelmeijer N."/>
            <person name="Judson N."/>
            <person name="Boyd D."/>
            <person name="Mekalanos J.J."/>
            <person name="Beckwith J."/>
        </authorList>
    </citation>
    <scope>CHARACTERIZATION</scope>
    <source>
        <strain>ATCC 39315 / El Tor Inaba N16961</strain>
    </source>
</reference>
<dbReference type="EMBL" id="AE003852">
    <property type="protein sequence ID" value="AAF93695.1"/>
    <property type="status" value="ALT_INIT"/>
    <property type="molecule type" value="Genomic_DNA"/>
</dbReference>
<dbReference type="PIR" id="B82311">
    <property type="entry name" value="B82311"/>
</dbReference>
<dbReference type="RefSeq" id="NP_230178.1">
    <property type="nucleotide sequence ID" value="NC_002505.1"/>
</dbReference>
<dbReference type="RefSeq" id="WP_001263189.1">
    <property type="nucleotide sequence ID" value="NZ_LT906614.1"/>
</dbReference>
<dbReference type="SMR" id="Q9KUJ3"/>
<dbReference type="STRING" id="243277.VC_0527"/>
<dbReference type="DNASU" id="2615818"/>
<dbReference type="EnsemblBacteria" id="AAF93695">
    <property type="protein sequence ID" value="AAF93695"/>
    <property type="gene ID" value="VC_0527"/>
</dbReference>
<dbReference type="GeneID" id="89515319"/>
<dbReference type="KEGG" id="vch:VC_0527"/>
<dbReference type="PATRIC" id="fig|243277.26.peg.503"/>
<dbReference type="eggNOG" id="COG2919">
    <property type="taxonomic scope" value="Bacteria"/>
</dbReference>
<dbReference type="HOGENOM" id="CLU_134863_5_2_6"/>
<dbReference type="Proteomes" id="UP000000584">
    <property type="component" value="Chromosome 1"/>
</dbReference>
<dbReference type="GO" id="GO:0032153">
    <property type="term" value="C:cell division site"/>
    <property type="evidence" value="ECO:0007669"/>
    <property type="project" value="UniProtKB-UniRule"/>
</dbReference>
<dbReference type="GO" id="GO:0030428">
    <property type="term" value="C:cell septum"/>
    <property type="evidence" value="ECO:0000318"/>
    <property type="project" value="GO_Central"/>
</dbReference>
<dbReference type="GO" id="GO:0005886">
    <property type="term" value="C:plasma membrane"/>
    <property type="evidence" value="ECO:0007669"/>
    <property type="project" value="UniProtKB-SubCell"/>
</dbReference>
<dbReference type="GO" id="GO:0043093">
    <property type="term" value="P:FtsZ-dependent cytokinesis"/>
    <property type="evidence" value="ECO:0000318"/>
    <property type="project" value="GO_Central"/>
</dbReference>
<dbReference type="Gene3D" id="1.20.5.400">
    <property type="match status" value="1"/>
</dbReference>
<dbReference type="HAMAP" id="MF_00599">
    <property type="entry name" value="FtsB"/>
    <property type="match status" value="1"/>
</dbReference>
<dbReference type="InterPro" id="IPR023081">
    <property type="entry name" value="Cell_div_FtsB"/>
</dbReference>
<dbReference type="InterPro" id="IPR007060">
    <property type="entry name" value="FtsL/DivIC"/>
</dbReference>
<dbReference type="NCBIfam" id="NF002058">
    <property type="entry name" value="PRK00888.1"/>
    <property type="match status" value="1"/>
</dbReference>
<dbReference type="PANTHER" id="PTHR37485">
    <property type="entry name" value="CELL DIVISION PROTEIN FTSB"/>
    <property type="match status" value="1"/>
</dbReference>
<dbReference type="PANTHER" id="PTHR37485:SF1">
    <property type="entry name" value="CELL DIVISION PROTEIN FTSB"/>
    <property type="match status" value="1"/>
</dbReference>
<dbReference type="Pfam" id="PF04977">
    <property type="entry name" value="DivIC"/>
    <property type="match status" value="1"/>
</dbReference>
<accession>Q9KUJ3</accession>
<proteinExistence type="evidence at protein level"/>
<comment type="function">
    <text evidence="1">Essential cell division protein. May link together the upstream cell division proteins, which are predominantly cytoplasmic, with the downstream cell division proteins, which are predominantly periplasmic.</text>
</comment>
<comment type="subunit">
    <text evidence="1">Part of a complex composed of FtsB, FtsL and FtsQ.</text>
</comment>
<comment type="subcellular location">
    <subcellularLocation>
        <location evidence="1">Cell inner membrane</location>
        <topology evidence="1">Single-pass type II membrane protein</topology>
    </subcellularLocation>
    <text evidence="1">Localizes to the division septum.</text>
</comment>
<comment type="similarity">
    <text evidence="1">Belongs to the FtsB family.</text>
</comment>
<comment type="sequence caution" evidence="2">
    <conflict type="erroneous initiation">
        <sequence resource="EMBL-CDS" id="AAF93695"/>
    </conflict>
</comment>
<protein>
    <recommendedName>
        <fullName evidence="1">Cell division protein FtsB</fullName>
    </recommendedName>
</protein>
<evidence type="ECO:0000255" key="1">
    <source>
        <dbReference type="HAMAP-Rule" id="MF_00599"/>
    </source>
</evidence>
<evidence type="ECO:0000305" key="2"/>
<keyword id="KW-0131">Cell cycle</keyword>
<keyword id="KW-0132">Cell division</keyword>
<keyword id="KW-0997">Cell inner membrane</keyword>
<keyword id="KW-1003">Cell membrane</keyword>
<keyword id="KW-0175">Coiled coil</keyword>
<keyword id="KW-0472">Membrane</keyword>
<keyword id="KW-1185">Reference proteome</keyword>
<keyword id="KW-0812">Transmembrane</keyword>
<keyword id="KW-1133">Transmembrane helix</keyword>
<gene>
    <name evidence="1" type="primary">ftsB</name>
    <name type="ordered locus">VC_0527</name>
</gene>
<feature type="chain" id="PRO_0000214457" description="Cell division protein FtsB">
    <location>
        <begin position="1"/>
        <end position="94"/>
    </location>
</feature>
<feature type="topological domain" description="Cytoplasmic" evidence="1">
    <location>
        <begin position="1"/>
        <end position="3"/>
    </location>
</feature>
<feature type="transmembrane region" description="Helical" evidence="1">
    <location>
        <begin position="4"/>
        <end position="21"/>
    </location>
</feature>
<feature type="topological domain" description="Periplasmic" evidence="1">
    <location>
        <begin position="22"/>
        <end position="94"/>
    </location>
</feature>
<feature type="coiled-coil region" evidence="1">
    <location>
        <begin position="33"/>
        <end position="76"/>
    </location>
</feature>
<organism>
    <name type="scientific">Vibrio cholerae serotype O1 (strain ATCC 39315 / El Tor Inaba N16961)</name>
    <dbReference type="NCBI Taxonomy" id="243277"/>
    <lineage>
        <taxon>Bacteria</taxon>
        <taxon>Pseudomonadati</taxon>
        <taxon>Pseudomonadota</taxon>
        <taxon>Gammaproteobacteria</taxon>
        <taxon>Vibrionales</taxon>
        <taxon>Vibrionaceae</taxon>
        <taxon>Vibrio</taxon>
    </lineage>
</organism>
<sequence>MRVFALTLSLLLVWLLYTLMWGKNGVMDFRAVQAEIEVQQQVNANLHLRNQEMFAEIDDLRQGLDAIEERARNELGMVKDGETFYRIIGEESRQ</sequence>
<name>FTSB_VIBCH</name>